<organism>
    <name type="scientific">Methylorubrum extorquens (strain ATCC 14718 / DSM 1338 / JCM 2805 / NCIMB 9133 / AM1)</name>
    <name type="common">Methylobacterium extorquens</name>
    <dbReference type="NCBI Taxonomy" id="272630"/>
    <lineage>
        <taxon>Bacteria</taxon>
        <taxon>Pseudomonadati</taxon>
        <taxon>Pseudomonadota</taxon>
        <taxon>Alphaproteobacteria</taxon>
        <taxon>Hyphomicrobiales</taxon>
        <taxon>Methylobacteriaceae</taxon>
        <taxon>Methylorubrum</taxon>
    </lineage>
</organism>
<feature type="chain" id="PRO_0000219927" description="UPF0335 protein MexAM1_META1p2947">
    <location>
        <begin position="1"/>
        <end position="88"/>
    </location>
</feature>
<dbReference type="EMBL" id="U87316">
    <property type="protein sequence ID" value="AAB66493.1"/>
    <property type="molecule type" value="Genomic_DNA"/>
</dbReference>
<dbReference type="EMBL" id="CP001510">
    <property type="protein sequence ID" value="ACS40699.1"/>
    <property type="molecule type" value="Genomic_DNA"/>
</dbReference>
<dbReference type="RefSeq" id="WP_003601858.1">
    <property type="nucleotide sequence ID" value="NC_012808.1"/>
</dbReference>
<dbReference type="SMR" id="O05113"/>
<dbReference type="STRING" id="272630.MexAM1_META1p2947"/>
<dbReference type="KEGG" id="mea:Mex_1p2947"/>
<dbReference type="eggNOG" id="COG3750">
    <property type="taxonomic scope" value="Bacteria"/>
</dbReference>
<dbReference type="HOGENOM" id="CLU_158651_3_0_5"/>
<dbReference type="OrthoDB" id="9813793at2"/>
<dbReference type="Proteomes" id="UP000009081">
    <property type="component" value="Chromosome"/>
</dbReference>
<dbReference type="GO" id="GO:0003677">
    <property type="term" value="F:DNA binding"/>
    <property type="evidence" value="ECO:0007669"/>
    <property type="project" value="InterPro"/>
</dbReference>
<dbReference type="HAMAP" id="MF_00797">
    <property type="entry name" value="UPF0335"/>
    <property type="match status" value="1"/>
</dbReference>
<dbReference type="InterPro" id="IPR018753">
    <property type="entry name" value="GapR-like"/>
</dbReference>
<dbReference type="InterPro" id="IPR046367">
    <property type="entry name" value="GapR-like_DNA-bd"/>
</dbReference>
<dbReference type="NCBIfam" id="NF010247">
    <property type="entry name" value="PRK13694.1"/>
    <property type="match status" value="1"/>
</dbReference>
<dbReference type="Pfam" id="PF10073">
    <property type="entry name" value="GapR_DNA-bd"/>
    <property type="match status" value="1"/>
</dbReference>
<gene>
    <name type="ordered locus">MexAM1_META1p2947</name>
</gene>
<reference key="1">
    <citation type="journal article" date="1997" name="J. Bacteriol.">
        <title>Identification and mutation of a gene required for glycerate kinase activity from a facultative methylotroph, Methylobacterium extorquens AM1.</title>
        <authorList>
            <person name="Chistoserdova L."/>
            <person name="Lidstrom M.E."/>
        </authorList>
    </citation>
    <scope>NUCLEOTIDE SEQUENCE [GENOMIC DNA]</scope>
</reference>
<reference key="2">
    <citation type="journal article" date="2009" name="PLoS ONE">
        <title>Methylobacterium genome sequences: a reference blueprint to investigate microbial metabolism of C1 compounds from natural and industrial sources.</title>
        <authorList>
            <person name="Vuilleumier S."/>
            <person name="Chistoserdova L."/>
            <person name="Lee M.-C."/>
            <person name="Bringel F."/>
            <person name="Lajus A."/>
            <person name="Zhou Y."/>
            <person name="Gourion B."/>
            <person name="Barbe V."/>
            <person name="Chang J."/>
            <person name="Cruveiller S."/>
            <person name="Dossat C."/>
            <person name="Gillett W."/>
            <person name="Gruffaz C."/>
            <person name="Haugen E."/>
            <person name="Hourcade E."/>
            <person name="Levy R."/>
            <person name="Mangenot S."/>
            <person name="Muller E."/>
            <person name="Nadalig T."/>
            <person name="Pagni M."/>
            <person name="Penny C."/>
            <person name="Peyraud R."/>
            <person name="Robinson D.G."/>
            <person name="Roche D."/>
            <person name="Rouy Z."/>
            <person name="Saenampechek C."/>
            <person name="Salvignol G."/>
            <person name="Vallenet D."/>
            <person name="Wu Z."/>
            <person name="Marx C.J."/>
            <person name="Vorholt J.A."/>
            <person name="Olson M.V."/>
            <person name="Kaul R."/>
            <person name="Weissenbach J."/>
            <person name="Medigue C."/>
            <person name="Lidstrom M.E."/>
        </authorList>
    </citation>
    <scope>NUCLEOTIDE SEQUENCE [LARGE SCALE GENOMIC DNA]</scope>
    <source>
        <strain>ATCC 14718 / DSM 1338 / JCM 2805 / NCIMB 9133 / AM1</strain>
    </source>
</reference>
<keyword id="KW-1185">Reference proteome</keyword>
<name>Y2947_METEA</name>
<comment type="similarity">
    <text evidence="1">Belongs to the UPF0335 family.</text>
</comment>
<sequence length="88" mass="9706">MAASPAPAVDPSSVAADQLKSIIERIERLEEEKAGIAGDIKDVYAEAKANGFDVKVLRKIISLRKRDHDERQEEEAILELYLQALGMA</sequence>
<accession>O05113</accession>
<accession>C5AUT9</accession>
<proteinExistence type="inferred from homology"/>
<evidence type="ECO:0000305" key="1"/>
<protein>
    <recommendedName>
        <fullName>UPF0335 protein MexAM1_META1p2947</fullName>
    </recommendedName>
</protein>